<proteinExistence type="evidence at transcript level"/>
<protein>
    <recommendedName>
        <fullName evidence="7">Dermonecrotic toxin LdSicTox-alphaIB1bii</fullName>
        <ecNumber evidence="4">4.6.1.-</ecNumber>
    </recommendedName>
    <alternativeName>
        <fullName>Phospholipase D</fullName>
        <shortName>PLD</shortName>
    </alternativeName>
    <alternativeName>
        <fullName>Sphingomyelin phosphodiesterase D</fullName>
        <shortName>SMD</shortName>
        <shortName>SMase D</shortName>
        <shortName>Sphingomyelinase D</shortName>
    </alternativeName>
</protein>
<comment type="function">
    <text evidence="1 3">Dermonecrotic toxins cleave the phosphodiester linkage between the phosphate and headgroup of certain phospholipids (sphingolipid and lysolipid substrates), forming an alcohol (often choline) and a cyclic phosphate (By similarity). This toxin acts on sphingomyelin (SM) (By similarity). It may also act on ceramide phosphoethanolamine (CPE), lysophosphatidylcholine (LPC) and lysophosphatidylethanolamine (LPE), but not on lysophosphatidylserine (LPS), and lysophosphatidylglycerol (LPG) (By similarity). It acts by transphosphatidylation, releasing exclusively cyclic phosphate products as second products (By similarity). Induces dermonecrosis, hemolysis, increased vascular permeability, edema, inflammatory response, and platelet aggregation (By similarity).</text>
</comment>
<comment type="catalytic activity">
    <reaction evidence="1">
        <text>an N-(acyl)-sphingosylphosphocholine = an N-(acyl)-sphingosyl-1,3-cyclic phosphate + choline</text>
        <dbReference type="Rhea" id="RHEA:60652"/>
        <dbReference type="ChEBI" id="CHEBI:15354"/>
        <dbReference type="ChEBI" id="CHEBI:64583"/>
        <dbReference type="ChEBI" id="CHEBI:143892"/>
    </reaction>
</comment>
<comment type="catalytic activity">
    <reaction evidence="1">
        <text>an N-(acyl)-sphingosylphosphoethanolamine = an N-(acyl)-sphingosyl-1,3-cyclic phosphate + ethanolamine</text>
        <dbReference type="Rhea" id="RHEA:60648"/>
        <dbReference type="ChEBI" id="CHEBI:57603"/>
        <dbReference type="ChEBI" id="CHEBI:143891"/>
        <dbReference type="ChEBI" id="CHEBI:143892"/>
    </reaction>
</comment>
<comment type="catalytic activity">
    <reaction evidence="1">
        <text>a 1-acyl-sn-glycero-3-phosphocholine = a 1-acyl-sn-glycero-2,3-cyclic phosphate + choline</text>
        <dbReference type="Rhea" id="RHEA:60700"/>
        <dbReference type="ChEBI" id="CHEBI:15354"/>
        <dbReference type="ChEBI" id="CHEBI:58168"/>
        <dbReference type="ChEBI" id="CHEBI:143947"/>
    </reaction>
</comment>
<comment type="catalytic activity">
    <reaction evidence="1">
        <text>a 1-acyl-sn-glycero-3-phosphoethanolamine = a 1-acyl-sn-glycero-2,3-cyclic phosphate + ethanolamine</text>
        <dbReference type="Rhea" id="RHEA:60704"/>
        <dbReference type="ChEBI" id="CHEBI:57603"/>
        <dbReference type="ChEBI" id="CHEBI:64381"/>
        <dbReference type="ChEBI" id="CHEBI:143947"/>
    </reaction>
</comment>
<comment type="cofactor">
    <cofactor evidence="5">
        <name>Mg(2+)</name>
        <dbReference type="ChEBI" id="CHEBI:18420"/>
    </cofactor>
    <text evidence="5">Binds 1 Mg(2+) ion per subunit.</text>
</comment>
<comment type="subcellular location">
    <subcellularLocation>
        <location evidence="9">Secreted</location>
    </subcellularLocation>
</comment>
<comment type="tissue specificity">
    <text evidence="9">Expressed by the venom gland.</text>
</comment>
<comment type="similarity">
    <text evidence="8">Belongs to the arthropod phospholipase D family. Class II subfamily.</text>
</comment>
<comment type="caution">
    <text evidence="1 2 4">The most common activity assay for dermonecrotic toxins detects enzymatic activity by monitoring choline release from substrate. Liberation of choline from sphingomyelin (SM) or lysophosphatidylcholine (LPC) is commonly assumed to result from substrate hydrolysis, giving either ceramide-1-phosphate (C1P) or lysophosphatidic acid (LPA), respectively, as a second product. However, two studies from Lajoie and colleagues (2013 and 2015) report the observation of exclusive formation of cyclic phosphate products as second products, resulting from intramolecular transphosphatidylation. Cyclic phosphates have vastly different biological properties from their monoester counterparts, and they may be relevant to the pathology of brown spider envenomation.</text>
</comment>
<organism>
    <name type="scientific">Loxosceles deserta</name>
    <name type="common">Desert recluse spider</name>
    <dbReference type="NCBI Taxonomy" id="424440"/>
    <lineage>
        <taxon>Eukaryota</taxon>
        <taxon>Metazoa</taxon>
        <taxon>Ecdysozoa</taxon>
        <taxon>Arthropoda</taxon>
        <taxon>Chelicerata</taxon>
        <taxon>Arachnida</taxon>
        <taxon>Araneae</taxon>
        <taxon>Araneomorphae</taxon>
        <taxon>Haplogynae</taxon>
        <taxon>Scytodoidea</taxon>
        <taxon>Sicariidae</taxon>
        <taxon>Loxosceles</taxon>
    </lineage>
</organism>
<reference key="1">
    <citation type="journal article" date="2009" name="Mol. Biol. Evol.">
        <title>Molecular evolution, functional variation, and proposed nomenclature of the gene family that includes sphingomyelinase D in sicariid spider venoms.</title>
        <authorList>
            <person name="Binford G.J."/>
            <person name="Bodner M.R."/>
            <person name="Cordes M.H."/>
            <person name="Baldwin K.L."/>
            <person name="Rynerson M.R."/>
            <person name="Burns S.N."/>
            <person name="Zobel-Thropp P.A."/>
        </authorList>
    </citation>
    <scope>NUCLEOTIDE SEQUENCE [MRNA]</scope>
    <scope>NOMENCLATURE</scope>
    <source>
        <tissue>Venom gland</tissue>
    </source>
</reference>
<evidence type="ECO:0000250" key="1">
    <source>
        <dbReference type="UniProtKB" id="A0A0D4WTV1"/>
    </source>
</evidence>
<evidence type="ECO:0000250" key="2">
    <source>
        <dbReference type="UniProtKB" id="A0A0D4WV12"/>
    </source>
</evidence>
<evidence type="ECO:0000250" key="3">
    <source>
        <dbReference type="UniProtKB" id="P0CE80"/>
    </source>
</evidence>
<evidence type="ECO:0000250" key="4">
    <source>
        <dbReference type="UniProtKB" id="Q4ZFU2"/>
    </source>
</evidence>
<evidence type="ECO:0000250" key="5">
    <source>
        <dbReference type="UniProtKB" id="Q8I914"/>
    </source>
</evidence>
<evidence type="ECO:0000255" key="6"/>
<evidence type="ECO:0000303" key="7">
    <source>
    </source>
</evidence>
<evidence type="ECO:0000305" key="8"/>
<evidence type="ECO:0000305" key="9">
    <source>
    </source>
</evidence>
<dbReference type="EC" id="4.6.1.-" evidence="4"/>
<dbReference type="EMBL" id="FJ171400">
    <property type="protein sequence ID" value="ACN48896.1"/>
    <property type="molecule type" value="mRNA"/>
</dbReference>
<dbReference type="SMR" id="C0JAW5"/>
<dbReference type="GO" id="GO:0005576">
    <property type="term" value="C:extracellular region"/>
    <property type="evidence" value="ECO:0007669"/>
    <property type="project" value="UniProtKB-SubCell"/>
</dbReference>
<dbReference type="GO" id="GO:0016829">
    <property type="term" value="F:lyase activity"/>
    <property type="evidence" value="ECO:0007669"/>
    <property type="project" value="UniProtKB-KW"/>
</dbReference>
<dbReference type="GO" id="GO:0046872">
    <property type="term" value="F:metal ion binding"/>
    <property type="evidence" value="ECO:0007669"/>
    <property type="project" value="UniProtKB-KW"/>
</dbReference>
<dbReference type="GO" id="GO:0008081">
    <property type="term" value="F:phosphoric diester hydrolase activity"/>
    <property type="evidence" value="ECO:0007669"/>
    <property type="project" value="InterPro"/>
</dbReference>
<dbReference type="GO" id="GO:0090729">
    <property type="term" value="F:toxin activity"/>
    <property type="evidence" value="ECO:0007669"/>
    <property type="project" value="UniProtKB-KW"/>
</dbReference>
<dbReference type="GO" id="GO:0031640">
    <property type="term" value="P:killing of cells of another organism"/>
    <property type="evidence" value="ECO:0007669"/>
    <property type="project" value="UniProtKB-KW"/>
</dbReference>
<dbReference type="GO" id="GO:0016042">
    <property type="term" value="P:lipid catabolic process"/>
    <property type="evidence" value="ECO:0007669"/>
    <property type="project" value="UniProtKB-KW"/>
</dbReference>
<dbReference type="CDD" id="cd08576">
    <property type="entry name" value="GDPD_like_SMaseD_PLD"/>
    <property type="match status" value="1"/>
</dbReference>
<dbReference type="Gene3D" id="3.20.20.190">
    <property type="entry name" value="Phosphatidylinositol (PI) phosphodiesterase"/>
    <property type="match status" value="1"/>
</dbReference>
<dbReference type="InterPro" id="IPR017946">
    <property type="entry name" value="PLC-like_Pdiesterase_TIM-brl"/>
</dbReference>
<dbReference type="Pfam" id="PF13653">
    <property type="entry name" value="GDPD_2"/>
    <property type="match status" value="1"/>
</dbReference>
<dbReference type="SUPFAM" id="SSF51695">
    <property type="entry name" value="PLC-like phosphodiesterases"/>
    <property type="match status" value="1"/>
</dbReference>
<feature type="chain" id="PRO_0000392786" description="Dermonecrotic toxin LdSicTox-alphaIB1bii">
    <location>
        <begin position="1" status="less than"/>
        <end position="273"/>
    </location>
</feature>
<feature type="active site" evidence="5">
    <location>
        <position position="5"/>
    </location>
</feature>
<feature type="active site" description="Nucleophile" evidence="5">
    <location>
        <position position="41"/>
    </location>
</feature>
<feature type="binding site" evidence="5">
    <location>
        <position position="25"/>
    </location>
    <ligand>
        <name>Mg(2+)</name>
        <dbReference type="ChEBI" id="CHEBI:18420"/>
    </ligand>
</feature>
<feature type="binding site" evidence="5">
    <location>
        <position position="27"/>
    </location>
    <ligand>
        <name>Mg(2+)</name>
        <dbReference type="ChEBI" id="CHEBI:18420"/>
    </ligand>
</feature>
<feature type="binding site" evidence="5">
    <location>
        <position position="85"/>
    </location>
    <ligand>
        <name>Mg(2+)</name>
        <dbReference type="ChEBI" id="CHEBI:18420"/>
    </ligand>
</feature>
<feature type="glycosylation site" description="N-linked (GlcNAc...) asparagine" evidence="6">
    <location>
        <position position="250"/>
    </location>
</feature>
<feature type="disulfide bond" evidence="3">
    <location>
        <begin position="45"/>
        <end position="51"/>
    </location>
</feature>
<feature type="disulfide bond" evidence="3">
    <location>
        <begin position="47"/>
        <end position="190"/>
    </location>
</feature>
<feature type="non-terminal residue">
    <location>
        <position position="1"/>
    </location>
</feature>
<sequence length="273" mass="30492">LDMGHMVNAIAQIDEFVNLGANSIETDVSFDDSANPEYTYHGVPCDCGRTCTKWEYFNEFLKGLRKATTPGDSKYHEKLVLVVFDLKTSSLYDNQASDAGKKLAKSLLQNYWNNGNNGGRAYIVLSIPNLAHYKLITGFKETLTSEGHPELMDKVGYDFSGNDEIGDVAKTYKKAGVTGHVWQSDGITNCLLRGLDRVRKAVANRDSSNGYINKVYYWTVDKRATTRDALDAGVDGIMTNYPDVIADVLNESAYKAKFRIASYDDNPWETFKN</sequence>
<accession>C0JAW5</accession>
<name>A1KB2_LOXDE</name>
<keyword id="KW-0204">Cytolysis</keyword>
<keyword id="KW-1061">Dermonecrotic toxin</keyword>
<keyword id="KW-1015">Disulfide bond</keyword>
<keyword id="KW-0325">Glycoprotein</keyword>
<keyword id="KW-0354">Hemolysis</keyword>
<keyword id="KW-0442">Lipid degradation</keyword>
<keyword id="KW-0443">Lipid metabolism</keyword>
<keyword id="KW-0456">Lyase</keyword>
<keyword id="KW-0460">Magnesium</keyword>
<keyword id="KW-0479">Metal-binding</keyword>
<keyword id="KW-0964">Secreted</keyword>
<keyword id="KW-0800">Toxin</keyword>